<organism>
    <name type="scientific">Staphylococcus aureus (strain MRSA252)</name>
    <dbReference type="NCBI Taxonomy" id="282458"/>
    <lineage>
        <taxon>Bacteria</taxon>
        <taxon>Bacillati</taxon>
        <taxon>Bacillota</taxon>
        <taxon>Bacilli</taxon>
        <taxon>Bacillales</taxon>
        <taxon>Staphylococcaceae</taxon>
        <taxon>Staphylococcus</taxon>
    </lineage>
</organism>
<sequence>MVKTVYVTGYKSFELNIFKDDAPEVHYLKQFIKHKIEQLLDEGLEWVLIQGQMGIELWTAEVVIELQRTYDSLKFAVITPFQGHTEKWNEHNQSKYANIIKHADYVDSIFHTSYQGPFQFKQADQFMLEHSDQTLLIYDEEQEASPKFFKQMLVDFMDKTNYTCDIVTFDELTAFINDLQWSEDQSF</sequence>
<comment type="similarity">
    <text evidence="1">Belongs to the UPF0398 family.</text>
</comment>
<name>Y1458_STAAR</name>
<proteinExistence type="inferred from homology"/>
<protein>
    <recommendedName>
        <fullName evidence="1">UPF0398 protein SAR1458</fullName>
    </recommendedName>
</protein>
<reference key="1">
    <citation type="journal article" date="2004" name="Proc. Natl. Acad. Sci. U.S.A.">
        <title>Complete genomes of two clinical Staphylococcus aureus strains: evidence for the rapid evolution of virulence and drug resistance.</title>
        <authorList>
            <person name="Holden M.T.G."/>
            <person name="Feil E.J."/>
            <person name="Lindsay J.A."/>
            <person name="Peacock S.J."/>
            <person name="Day N.P.J."/>
            <person name="Enright M.C."/>
            <person name="Foster T.J."/>
            <person name="Moore C.E."/>
            <person name="Hurst L."/>
            <person name="Atkin R."/>
            <person name="Barron A."/>
            <person name="Bason N."/>
            <person name="Bentley S.D."/>
            <person name="Chillingworth C."/>
            <person name="Chillingworth T."/>
            <person name="Churcher C."/>
            <person name="Clark L."/>
            <person name="Corton C."/>
            <person name="Cronin A."/>
            <person name="Doggett J."/>
            <person name="Dowd L."/>
            <person name="Feltwell T."/>
            <person name="Hance Z."/>
            <person name="Harris B."/>
            <person name="Hauser H."/>
            <person name="Holroyd S."/>
            <person name="Jagels K."/>
            <person name="James K.D."/>
            <person name="Lennard N."/>
            <person name="Line A."/>
            <person name="Mayes R."/>
            <person name="Moule S."/>
            <person name="Mungall K."/>
            <person name="Ormond D."/>
            <person name="Quail M.A."/>
            <person name="Rabbinowitsch E."/>
            <person name="Rutherford K.M."/>
            <person name="Sanders M."/>
            <person name="Sharp S."/>
            <person name="Simmonds M."/>
            <person name="Stevens K."/>
            <person name="Whitehead S."/>
            <person name="Barrell B.G."/>
            <person name="Spratt B.G."/>
            <person name="Parkhill J."/>
        </authorList>
    </citation>
    <scope>NUCLEOTIDE SEQUENCE [LARGE SCALE GENOMIC DNA]</scope>
    <source>
        <strain>MRSA252</strain>
    </source>
</reference>
<accession>Q6GGW3</accession>
<gene>
    <name type="ordered locus">SAR1458</name>
</gene>
<dbReference type="EMBL" id="BX571856">
    <property type="protein sequence ID" value="CAG40455.1"/>
    <property type="molecule type" value="Genomic_DNA"/>
</dbReference>
<dbReference type="RefSeq" id="WP_000241308.1">
    <property type="nucleotide sequence ID" value="NC_002952.2"/>
</dbReference>
<dbReference type="SMR" id="Q6GGW3"/>
<dbReference type="KEGG" id="sar:SAR1458"/>
<dbReference type="HOGENOM" id="CLU_105319_0_0_9"/>
<dbReference type="Proteomes" id="UP000000596">
    <property type="component" value="Chromosome"/>
</dbReference>
<dbReference type="Gene3D" id="3.40.50.450">
    <property type="match status" value="1"/>
</dbReference>
<dbReference type="HAMAP" id="MF_01575">
    <property type="entry name" value="UPF0398"/>
    <property type="match status" value="1"/>
</dbReference>
<dbReference type="InterPro" id="IPR010697">
    <property type="entry name" value="YspA"/>
</dbReference>
<dbReference type="NCBIfam" id="NF010181">
    <property type="entry name" value="PRK13660.1"/>
    <property type="match status" value="1"/>
</dbReference>
<dbReference type="PANTHER" id="PTHR38440:SF1">
    <property type="entry name" value="UPF0398 PROTEIN SPR0331"/>
    <property type="match status" value="1"/>
</dbReference>
<dbReference type="PANTHER" id="PTHR38440">
    <property type="entry name" value="UPF0398 PROTEIN YPSA"/>
    <property type="match status" value="1"/>
</dbReference>
<dbReference type="Pfam" id="PF06908">
    <property type="entry name" value="YpsA"/>
    <property type="match status" value="1"/>
</dbReference>
<dbReference type="PIRSF" id="PIRSF021290">
    <property type="entry name" value="DUF1273"/>
    <property type="match status" value="1"/>
</dbReference>
<dbReference type="SUPFAM" id="SSF102405">
    <property type="entry name" value="MCP/YpsA-like"/>
    <property type="match status" value="1"/>
</dbReference>
<evidence type="ECO:0000255" key="1">
    <source>
        <dbReference type="HAMAP-Rule" id="MF_01575"/>
    </source>
</evidence>
<feature type="chain" id="PRO_0000267170" description="UPF0398 protein SAR1458">
    <location>
        <begin position="1"/>
        <end position="187"/>
    </location>
</feature>